<comment type="function">
    <text evidence="2">GTP hydrolase that promotes the GTP-dependent binding of aminoacyl-tRNA to the A-site of ribosomes during protein biosynthesis.</text>
</comment>
<comment type="catalytic activity">
    <reaction evidence="2">
        <text>GTP + H2O = GDP + phosphate + H(+)</text>
        <dbReference type="Rhea" id="RHEA:19669"/>
        <dbReference type="ChEBI" id="CHEBI:15377"/>
        <dbReference type="ChEBI" id="CHEBI:15378"/>
        <dbReference type="ChEBI" id="CHEBI:37565"/>
        <dbReference type="ChEBI" id="CHEBI:43474"/>
        <dbReference type="ChEBI" id="CHEBI:58189"/>
        <dbReference type="EC" id="3.6.5.3"/>
    </reaction>
    <physiologicalReaction direction="left-to-right" evidence="2">
        <dbReference type="Rhea" id="RHEA:19670"/>
    </physiologicalReaction>
</comment>
<comment type="subunit">
    <text evidence="2">Monomer.</text>
</comment>
<comment type="subcellular location">
    <subcellularLocation>
        <location evidence="2">Cytoplasm</location>
    </subcellularLocation>
</comment>
<comment type="similarity">
    <text evidence="2">Belongs to the TRAFAC class translation factor GTPase superfamily. Classic translation factor GTPase family. EF-Tu/EF-1A subfamily.</text>
</comment>
<evidence type="ECO:0000250" key="1"/>
<evidence type="ECO:0000255" key="2">
    <source>
        <dbReference type="HAMAP-Rule" id="MF_00118"/>
    </source>
</evidence>
<name>EFTU_STRCJ</name>
<gene>
    <name evidence="2" type="primary">tuf</name>
</gene>
<dbReference type="EC" id="3.6.5.3" evidence="2"/>
<dbReference type="EMBL" id="X98831">
    <property type="protein sequence ID" value="CAA67349.1"/>
    <property type="molecule type" value="Genomic_DNA"/>
</dbReference>
<dbReference type="SMR" id="P95724"/>
<dbReference type="GO" id="GO:0005829">
    <property type="term" value="C:cytosol"/>
    <property type="evidence" value="ECO:0007669"/>
    <property type="project" value="TreeGrafter"/>
</dbReference>
<dbReference type="GO" id="GO:0005525">
    <property type="term" value="F:GTP binding"/>
    <property type="evidence" value="ECO:0007669"/>
    <property type="project" value="UniProtKB-UniRule"/>
</dbReference>
<dbReference type="GO" id="GO:0003924">
    <property type="term" value="F:GTPase activity"/>
    <property type="evidence" value="ECO:0007669"/>
    <property type="project" value="InterPro"/>
</dbReference>
<dbReference type="GO" id="GO:0003746">
    <property type="term" value="F:translation elongation factor activity"/>
    <property type="evidence" value="ECO:0007669"/>
    <property type="project" value="UniProtKB-UniRule"/>
</dbReference>
<dbReference type="CDD" id="cd01884">
    <property type="entry name" value="EF_Tu"/>
    <property type="match status" value="1"/>
</dbReference>
<dbReference type="CDD" id="cd03697">
    <property type="entry name" value="EFTU_II"/>
    <property type="match status" value="1"/>
</dbReference>
<dbReference type="CDD" id="cd03707">
    <property type="entry name" value="EFTU_III"/>
    <property type="match status" value="1"/>
</dbReference>
<dbReference type="FunFam" id="2.40.30.10:FF:000001">
    <property type="entry name" value="Elongation factor Tu"/>
    <property type="match status" value="1"/>
</dbReference>
<dbReference type="FunFam" id="3.40.50.300:FF:000003">
    <property type="entry name" value="Elongation factor Tu"/>
    <property type="match status" value="1"/>
</dbReference>
<dbReference type="Gene3D" id="3.40.50.300">
    <property type="entry name" value="P-loop containing nucleotide triphosphate hydrolases"/>
    <property type="match status" value="1"/>
</dbReference>
<dbReference type="Gene3D" id="2.40.30.10">
    <property type="entry name" value="Translation factors"/>
    <property type="match status" value="2"/>
</dbReference>
<dbReference type="HAMAP" id="MF_00118_B">
    <property type="entry name" value="EF_Tu_B"/>
    <property type="match status" value="1"/>
</dbReference>
<dbReference type="InterPro" id="IPR041709">
    <property type="entry name" value="EF-Tu_GTP-bd"/>
</dbReference>
<dbReference type="InterPro" id="IPR050055">
    <property type="entry name" value="EF-Tu_GTPase"/>
</dbReference>
<dbReference type="InterPro" id="IPR004161">
    <property type="entry name" value="EFTu-like_2"/>
</dbReference>
<dbReference type="InterPro" id="IPR033720">
    <property type="entry name" value="EFTU_2"/>
</dbReference>
<dbReference type="InterPro" id="IPR031157">
    <property type="entry name" value="G_TR_CS"/>
</dbReference>
<dbReference type="InterPro" id="IPR027417">
    <property type="entry name" value="P-loop_NTPase"/>
</dbReference>
<dbReference type="InterPro" id="IPR005225">
    <property type="entry name" value="Small_GTP-bd"/>
</dbReference>
<dbReference type="InterPro" id="IPR000795">
    <property type="entry name" value="T_Tr_GTP-bd_dom"/>
</dbReference>
<dbReference type="InterPro" id="IPR009000">
    <property type="entry name" value="Transl_B-barrel_sf"/>
</dbReference>
<dbReference type="InterPro" id="IPR009001">
    <property type="entry name" value="Transl_elong_EF1A/Init_IF2_C"/>
</dbReference>
<dbReference type="InterPro" id="IPR004541">
    <property type="entry name" value="Transl_elong_EFTu/EF1A_bac/org"/>
</dbReference>
<dbReference type="InterPro" id="IPR004160">
    <property type="entry name" value="Transl_elong_EFTu/EF1A_C"/>
</dbReference>
<dbReference type="NCBIfam" id="TIGR00485">
    <property type="entry name" value="EF-Tu"/>
    <property type="match status" value="1"/>
</dbReference>
<dbReference type="NCBIfam" id="NF000766">
    <property type="entry name" value="PRK00049.1"/>
    <property type="match status" value="1"/>
</dbReference>
<dbReference type="NCBIfam" id="NF009372">
    <property type="entry name" value="PRK12735.1"/>
    <property type="match status" value="1"/>
</dbReference>
<dbReference type="NCBIfam" id="NF009373">
    <property type="entry name" value="PRK12736.1"/>
    <property type="match status" value="1"/>
</dbReference>
<dbReference type="NCBIfam" id="TIGR00231">
    <property type="entry name" value="small_GTP"/>
    <property type="match status" value="1"/>
</dbReference>
<dbReference type="PANTHER" id="PTHR43721:SF22">
    <property type="entry name" value="ELONGATION FACTOR TU, MITOCHONDRIAL"/>
    <property type="match status" value="1"/>
</dbReference>
<dbReference type="PANTHER" id="PTHR43721">
    <property type="entry name" value="ELONGATION FACTOR TU-RELATED"/>
    <property type="match status" value="1"/>
</dbReference>
<dbReference type="Pfam" id="PF00009">
    <property type="entry name" value="GTP_EFTU"/>
    <property type="match status" value="1"/>
</dbReference>
<dbReference type="Pfam" id="PF03144">
    <property type="entry name" value="GTP_EFTU_D2"/>
    <property type="match status" value="1"/>
</dbReference>
<dbReference type="Pfam" id="PF03143">
    <property type="entry name" value="GTP_EFTU_D3"/>
    <property type="match status" value="1"/>
</dbReference>
<dbReference type="PRINTS" id="PR00315">
    <property type="entry name" value="ELONGATNFCT"/>
</dbReference>
<dbReference type="SUPFAM" id="SSF50465">
    <property type="entry name" value="EF-Tu/eEF-1alpha/eIF2-gamma C-terminal domain"/>
    <property type="match status" value="1"/>
</dbReference>
<dbReference type="SUPFAM" id="SSF52540">
    <property type="entry name" value="P-loop containing nucleoside triphosphate hydrolases"/>
    <property type="match status" value="1"/>
</dbReference>
<dbReference type="SUPFAM" id="SSF50447">
    <property type="entry name" value="Translation proteins"/>
    <property type="match status" value="1"/>
</dbReference>
<dbReference type="PROSITE" id="PS00301">
    <property type="entry name" value="G_TR_1"/>
    <property type="match status" value="1"/>
</dbReference>
<dbReference type="PROSITE" id="PS51722">
    <property type="entry name" value="G_TR_2"/>
    <property type="match status" value="1"/>
</dbReference>
<feature type="chain" id="PRO_0000091400" description="Elongation factor Tu">
    <location>
        <begin position="1"/>
        <end position="397"/>
    </location>
</feature>
<feature type="domain" description="tr-type G">
    <location>
        <begin position="10"/>
        <end position="206"/>
    </location>
</feature>
<feature type="region of interest" description="G1" evidence="1">
    <location>
        <begin position="19"/>
        <end position="26"/>
    </location>
</feature>
<feature type="region of interest" description="G2" evidence="1">
    <location>
        <begin position="62"/>
        <end position="66"/>
    </location>
</feature>
<feature type="region of interest" description="G3" evidence="1">
    <location>
        <begin position="83"/>
        <end position="86"/>
    </location>
</feature>
<feature type="region of interest" description="G4" evidence="1">
    <location>
        <begin position="138"/>
        <end position="141"/>
    </location>
</feature>
<feature type="region of interest" description="G5" evidence="1">
    <location>
        <begin position="176"/>
        <end position="178"/>
    </location>
</feature>
<feature type="binding site" evidence="2">
    <location>
        <begin position="19"/>
        <end position="26"/>
    </location>
    <ligand>
        <name>GTP</name>
        <dbReference type="ChEBI" id="CHEBI:37565"/>
    </ligand>
</feature>
<feature type="binding site" evidence="2">
    <location>
        <position position="26"/>
    </location>
    <ligand>
        <name>Mg(2+)</name>
        <dbReference type="ChEBI" id="CHEBI:18420"/>
    </ligand>
</feature>
<feature type="binding site" evidence="2">
    <location>
        <begin position="83"/>
        <end position="87"/>
    </location>
    <ligand>
        <name>GTP</name>
        <dbReference type="ChEBI" id="CHEBI:37565"/>
    </ligand>
</feature>
<feature type="binding site" evidence="2">
    <location>
        <begin position="138"/>
        <end position="141"/>
    </location>
    <ligand>
        <name>GTP</name>
        <dbReference type="ChEBI" id="CHEBI:37565"/>
    </ligand>
</feature>
<keyword id="KW-0963">Cytoplasm</keyword>
<keyword id="KW-0251">Elongation factor</keyword>
<keyword id="KW-0342">GTP-binding</keyword>
<keyword id="KW-0378">Hydrolase</keyword>
<keyword id="KW-0460">Magnesium</keyword>
<keyword id="KW-0479">Metal-binding</keyword>
<keyword id="KW-0547">Nucleotide-binding</keyword>
<keyword id="KW-0648">Protein biosynthesis</keyword>
<sequence length="397" mass="43891">MAKAKFERTKPHVNIGTIGHVDHGKTTLTAAITKVLHDAIPDLNPFTPFDEIDKAPEERQRGITISIAHVEYQTESRHYAHVDCPGHADYIKNMITGAAQMDGAILVVAATDGPMPQTKEHVLLARQSGVPYIVVALNKADMVDDEEIMELVELEVRELLSEYEFDGDNCPVVQVSALKALEGDKEWGEKLLGLMKAVDENIPQPERDVDKPFLMPIEDVFTITGRGTVVTGRIERGVLKVNETVDIIGIKTEKTTTTVTGIEMFRKLLDEGQAGENVGLLLRGIKREDVERGQCIIKPGTVTPHTEFEATAYILSKDEGGRHTPFFNNYRPQFYFRTTDVTGVVTLKEGTEMVMPGDNAEMTVNLIQPVAMEEGLRFTIREGGRTVGAGQVVKINK</sequence>
<protein>
    <recommendedName>
        <fullName evidence="2">Elongation factor Tu</fullName>
        <shortName evidence="2">EF-Tu</shortName>
        <ecNumber evidence="2">3.6.5.3</ecNumber>
    </recommendedName>
</protein>
<organism>
    <name type="scientific">Streptomyces cinnamoneus</name>
    <name type="common">Streptoverticillium cinnamoneum</name>
    <dbReference type="NCBI Taxonomy" id="53446"/>
    <lineage>
        <taxon>Bacteria</taxon>
        <taxon>Bacillati</taxon>
        <taxon>Actinomycetota</taxon>
        <taxon>Actinomycetes</taxon>
        <taxon>Kitasatosporales</taxon>
        <taxon>Streptomycetaceae</taxon>
        <taxon>Streptomyces</taxon>
        <taxon>Streptomyces cinnamoneus group</taxon>
    </lineage>
</organism>
<proteinExistence type="inferred from homology"/>
<reference key="1">
    <citation type="submission" date="1996-12" db="EMBL/GenBank/DDBJ databases">
        <authorList>
            <person name="Cappellano C."/>
            <person name="Monti F."/>
            <person name="Sosio M."/>
            <person name="Donadio S."/>
            <person name="Sarubbi E."/>
        </authorList>
    </citation>
    <scope>NUCLEOTIDE SEQUENCE [GENOMIC DNA]</scope>
    <source>
        <strain>Tu89</strain>
    </source>
</reference>
<accession>P95724</accession>